<proteinExistence type="evidence at transcript level"/>
<dbReference type="EMBL" id="AF495522">
    <property type="protein sequence ID" value="AAM14623.1"/>
    <property type="molecule type" value="mRNA"/>
</dbReference>
<dbReference type="RefSeq" id="NP_620243.1">
    <property type="nucleotide sequence ID" value="NM_138888.2"/>
</dbReference>
<dbReference type="SMR" id="P83871"/>
<dbReference type="FunCoup" id="P83871">
    <property type="interactions" value="3223"/>
</dbReference>
<dbReference type="IntAct" id="P83871">
    <property type="interactions" value="1"/>
</dbReference>
<dbReference type="STRING" id="10116.ENSRNOP00000005837"/>
<dbReference type="iPTMnet" id="P83871"/>
<dbReference type="PhosphoSitePlus" id="P83871"/>
<dbReference type="jPOST" id="P83871"/>
<dbReference type="PaxDb" id="10116-ENSRNOP00000005837"/>
<dbReference type="Ensembl" id="ENSRNOT00000113004.1">
    <property type="protein sequence ID" value="ENSRNOP00000095542.1"/>
    <property type="gene ID" value="ENSRNOG00000024170.6"/>
</dbReference>
<dbReference type="GeneID" id="192246"/>
<dbReference type="KEGG" id="rno:192246"/>
<dbReference type="UCSC" id="RGD:621555">
    <property type="organism name" value="rat"/>
</dbReference>
<dbReference type="AGR" id="RGD:621555"/>
<dbReference type="CTD" id="84844"/>
<dbReference type="RGD" id="621555">
    <property type="gene designation" value="Phf5a"/>
</dbReference>
<dbReference type="eggNOG" id="KOG1705">
    <property type="taxonomic scope" value="Eukaryota"/>
</dbReference>
<dbReference type="GeneTree" id="ENSGT00390000018518"/>
<dbReference type="HOGENOM" id="CLU_110369_2_0_1"/>
<dbReference type="InParanoid" id="P83871"/>
<dbReference type="OMA" id="AYYCWEC"/>
<dbReference type="OrthoDB" id="10248186at2759"/>
<dbReference type="PhylomeDB" id="P83871"/>
<dbReference type="TreeFam" id="TF105627"/>
<dbReference type="Reactome" id="R-RNO-72163">
    <property type="pathway name" value="mRNA Splicing - Major Pathway"/>
</dbReference>
<dbReference type="PRO" id="PR:P83871"/>
<dbReference type="Proteomes" id="UP000002494">
    <property type="component" value="Chromosome 7"/>
</dbReference>
<dbReference type="Bgee" id="ENSRNOG00000024170">
    <property type="expression patterns" value="Expressed in thymus and 20 other cell types or tissues"/>
</dbReference>
<dbReference type="ExpressionAtlas" id="P83871">
    <property type="expression patterns" value="baseline and differential"/>
</dbReference>
<dbReference type="GO" id="GO:0016363">
    <property type="term" value="C:nuclear matrix"/>
    <property type="evidence" value="ECO:0000266"/>
    <property type="project" value="RGD"/>
</dbReference>
<dbReference type="GO" id="GO:0016607">
    <property type="term" value="C:nuclear speck"/>
    <property type="evidence" value="ECO:0000250"/>
    <property type="project" value="UniProtKB"/>
</dbReference>
<dbReference type="GO" id="GO:0005634">
    <property type="term" value="C:nucleus"/>
    <property type="evidence" value="ECO:0000266"/>
    <property type="project" value="RGD"/>
</dbReference>
<dbReference type="GO" id="GO:0071011">
    <property type="term" value="C:precatalytic spliceosome"/>
    <property type="evidence" value="ECO:0000318"/>
    <property type="project" value="GO_Central"/>
</dbReference>
<dbReference type="GO" id="GO:0005689">
    <property type="term" value="C:U12-type spliceosomal complex"/>
    <property type="evidence" value="ECO:0000266"/>
    <property type="project" value="RGD"/>
</dbReference>
<dbReference type="GO" id="GO:0005686">
    <property type="term" value="C:U2 snRNP"/>
    <property type="evidence" value="ECO:0000250"/>
    <property type="project" value="UniProtKB"/>
</dbReference>
<dbReference type="GO" id="GO:0071005">
    <property type="term" value="C:U2-type precatalytic spliceosome"/>
    <property type="evidence" value="ECO:0000266"/>
    <property type="project" value="RGD"/>
</dbReference>
<dbReference type="GO" id="GO:0005684">
    <property type="term" value="C:U2-type spliceosomal complex"/>
    <property type="evidence" value="ECO:0000266"/>
    <property type="project" value="RGD"/>
</dbReference>
<dbReference type="GO" id="GO:0003677">
    <property type="term" value="F:DNA binding"/>
    <property type="evidence" value="ECO:0007669"/>
    <property type="project" value="UniProtKB-KW"/>
</dbReference>
<dbReference type="GO" id="GO:0003723">
    <property type="term" value="F:RNA binding"/>
    <property type="evidence" value="ECO:0000266"/>
    <property type="project" value="RGD"/>
</dbReference>
<dbReference type="GO" id="GO:0008270">
    <property type="term" value="F:zinc ion binding"/>
    <property type="evidence" value="ECO:0000266"/>
    <property type="project" value="RGD"/>
</dbReference>
<dbReference type="GO" id="GO:0000398">
    <property type="term" value="P:mRNA splicing, via spliceosome"/>
    <property type="evidence" value="ECO:0000250"/>
    <property type="project" value="UniProtKB"/>
</dbReference>
<dbReference type="GO" id="GO:0045893">
    <property type="term" value="P:positive regulation of DNA-templated transcription"/>
    <property type="evidence" value="ECO:0000314"/>
    <property type="project" value="UniProtKB"/>
</dbReference>
<dbReference type="GO" id="GO:0048863">
    <property type="term" value="P:stem cell differentiation"/>
    <property type="evidence" value="ECO:0000266"/>
    <property type="project" value="RGD"/>
</dbReference>
<dbReference type="InterPro" id="IPR005345">
    <property type="entry name" value="PHF5"/>
</dbReference>
<dbReference type="PANTHER" id="PTHR13120">
    <property type="entry name" value="PHD FINGER-LIKE DOMAIN-CONTAINING PROTEIN 5A"/>
    <property type="match status" value="1"/>
</dbReference>
<dbReference type="Pfam" id="PF03660">
    <property type="entry name" value="PHF5"/>
    <property type="match status" value="1"/>
</dbReference>
<dbReference type="PIRSF" id="PIRSF016468">
    <property type="entry name" value="PHF5"/>
    <property type="match status" value="1"/>
</dbReference>
<reference evidence="4" key="1">
    <citation type="journal article" date="2003" name="Endocrinology">
        <title>Ini, a small nuclear protein that enhances the response of the connexin43 gene to estrogen.</title>
        <authorList>
            <person name="Oltra E."/>
            <person name="Pfeifer I."/>
            <person name="Werner R."/>
        </authorList>
    </citation>
    <scope>NUCLEOTIDE SEQUENCE [MRNA]</scope>
    <scope>FUNCTION</scope>
    <scope>SUBCELLULAR LOCATION</scope>
    <scope>TISSUE SPECIFICITY</scope>
    <scope>INDUCTION</scope>
    <source>
        <strain evidence="5">Sprague-Dawley</strain>
        <tissue evidence="5">Myometrium</tissue>
    </source>
</reference>
<sequence length="110" mass="12405">MAKHHPDLIFCRKQAGVAIGRLCEKCDGKCVICDSYVRPCTLVRICDECNYGSYQGRCVICGGPGVSDAYYCKECTIQEKDRDGCPKIVNLGSSKTDLFYERKKYGFKKR</sequence>
<gene>
    <name type="primary">Phf5a</name>
    <name type="synonym">Ini</name>
</gene>
<protein>
    <recommendedName>
        <fullName>PHD finger-like domain-containing protein 5A</fullName>
        <shortName>PHD finger-like domain protein 5A</shortName>
    </recommendedName>
    <alternativeName>
        <fullName>Splicing factor 3B-associated 14 kDa protein</fullName>
        <shortName>SF3b14b</shortName>
    </alternativeName>
</protein>
<name>PHF5A_RAT</name>
<comment type="function">
    <text evidence="1 2 3">Component of the 17S U2 SnRNP complex of the spliceosome, a large ribonucleoprotein complex that removes introns from transcribed pre-mRNAs (By similarity). The 17S U2 SnRNP complex (1) directly participates in early spliceosome assembly and (2) mediates recognition of the intron branch site during pre-mRNA splicing by promoting the selection of the pre-mRNA branch-site adenosine, the nucleophile for the first step of splicing (By similarity). Within the 17S U2 SnRNP complex, PHF5A is part of the SF3B subcomplex, which is required for 'A' complex assembly formed by the stable binding of U2 snRNP to the branchpoint sequence in pre-mRNA (By similarity). Sequence independent binding of SF3A and SF3B subcomplexes upstream of the branch site is essential, it may anchor U2 snRNP to the pre-mRNA (By similarity). Also acts as a component of the minor spliceosome, which is involved in the splicing of U12-type introns in pre-mRNAs (By similarity). Also involved in elongation by RNA polymerase II as part of the PAF1 complex (PAF1C) (By similarity). PAF1C is required for maintenance of embryonic stem cell (ESC) self-renewal and cellular reprogramming of stem cells (By similarity). Maintains pluripotency by recruiting and stabilizing PAF1C on pluripotency genes loci, and by regulating the expression of the pluripotency genes (By similarity). Regulates the deposition of elongation-associated histone modifications, including dimethylated histone H3 'Lys-79' (H3K79me2) and trimethylated histone H3 'Lys-36' (H3K36me3), on PAF1C targets, self-renewal and pluripotency genes (By similarity). Regulates RNA polymerase II promoter-proximal pause release of the PAF1C targets and self-renewal genes, and the levels of elongating ('Ser-2' phosphorylated) RNA polymerase II in their gene bodies (By similarity). Regulates muscle specification in adult stem cells by stabilizing PAF1C in chromatin to promote myogenic differentiation (By similarity). Acts as a transcriptional regulator by binding to the GJA1/Cx43 promoter and enhancing its up-regulation by ESR1/ER-alpha (PubMed:12810571).</text>
</comment>
<comment type="subunit">
    <text evidence="1 2">Component of the 17S U2 SnRNP complex, a ribonucleoprotein complex that contains small nuclear RNA (snRNA) U2 and a number of specific proteins (By similarity). Part of the SF3B subcomplex of the 17S U2 SnRNP complex (By similarity). SF3B associates with the splicing subcomplex SF3A and a 12S RNA unit to form the U2 small nuclear ribonucleoproteins complex (U2 snRNP) (By similarity). Within the SF3B complex interacts directly with SF3B1 and SF3B3 (By similarity). Component of the minor spliceosome, which splices U12-type introns (By similarity). Within this complex, interacts with CRIPT (By similarity). Interacts (via N-terminus) with U2AF1 and SRSF5; acts to bridge the two (By similarity). Interacts (via C-terminus) with EP400 and DDX1; acts to bridge the two (By similarity). Interacts with the PAF1 complex (PAF1C) composed of CDC73, PAF1, LEO1, CTR9, RTF1 and SKIC8 (By similarity). Within the PAF1C interacts directly with CDC73 and SKIC8 (By similarity). Interacts with RNA polymerase II (By similarity).</text>
</comment>
<comment type="subcellular location">
    <subcellularLocation>
        <location evidence="3">Nucleus</location>
    </subcellularLocation>
    <subcellularLocation>
        <location evidence="1">Nucleus speckle</location>
    </subcellularLocation>
</comment>
<comment type="tissue specificity">
    <text evidence="3">Expressed in all tissues tested including brain, heart, ovary, uterus, skeletal muscle and testis.</text>
</comment>
<comment type="induction">
    <text evidence="3">By estrogen.</text>
</comment>
<comment type="similarity">
    <text evidence="4">Belongs to the PHF5 family.</text>
</comment>
<keyword id="KW-0007">Acetylation</keyword>
<keyword id="KW-0238">DNA-binding</keyword>
<keyword id="KW-0479">Metal-binding</keyword>
<keyword id="KW-0507">mRNA processing</keyword>
<keyword id="KW-0508">mRNA splicing</keyword>
<keyword id="KW-0539">Nucleus</keyword>
<keyword id="KW-0597">Phosphoprotein</keyword>
<keyword id="KW-1185">Reference proteome</keyword>
<keyword id="KW-0694">RNA-binding</keyword>
<keyword id="KW-0747">Spliceosome</keyword>
<keyword id="KW-0804">Transcription</keyword>
<keyword id="KW-0805">Transcription regulation</keyword>
<keyword id="KW-0862">Zinc</keyword>
<accession>P83871</accession>
<organism>
    <name type="scientific">Rattus norvegicus</name>
    <name type="common">Rat</name>
    <dbReference type="NCBI Taxonomy" id="10116"/>
    <lineage>
        <taxon>Eukaryota</taxon>
        <taxon>Metazoa</taxon>
        <taxon>Chordata</taxon>
        <taxon>Craniata</taxon>
        <taxon>Vertebrata</taxon>
        <taxon>Euteleostomi</taxon>
        <taxon>Mammalia</taxon>
        <taxon>Eutheria</taxon>
        <taxon>Euarchontoglires</taxon>
        <taxon>Glires</taxon>
        <taxon>Rodentia</taxon>
        <taxon>Myomorpha</taxon>
        <taxon>Muroidea</taxon>
        <taxon>Muridae</taxon>
        <taxon>Murinae</taxon>
        <taxon>Rattus</taxon>
    </lineage>
</organism>
<evidence type="ECO:0000250" key="1">
    <source>
        <dbReference type="UniProtKB" id="P83870"/>
    </source>
</evidence>
<evidence type="ECO:0000250" key="2">
    <source>
        <dbReference type="UniProtKB" id="Q7RTV0"/>
    </source>
</evidence>
<evidence type="ECO:0000269" key="3">
    <source>
    </source>
</evidence>
<evidence type="ECO:0000305" key="4"/>
<evidence type="ECO:0000312" key="5">
    <source>
        <dbReference type="EMBL" id="AAM14623.1"/>
    </source>
</evidence>
<feature type="initiator methionine" description="Removed" evidence="1">
    <location>
        <position position="1"/>
    </location>
</feature>
<feature type="chain" id="PRO_0000218718" description="PHD finger-like domain-containing protein 5A">
    <location>
        <begin position="2"/>
        <end position="110"/>
    </location>
</feature>
<feature type="region of interest" description="Interaction with SF3B1 and SF3B3" evidence="2">
    <location>
        <begin position="35"/>
        <end position="51"/>
    </location>
</feature>
<feature type="region of interest" description="Interaction with SF3B3" evidence="2">
    <location>
        <begin position="79"/>
        <end position="82"/>
    </location>
</feature>
<feature type="binding site" evidence="2">
    <location>
        <position position="11"/>
    </location>
    <ligand>
        <name>Zn(2+)</name>
        <dbReference type="ChEBI" id="CHEBI:29105"/>
        <label>1</label>
    </ligand>
</feature>
<feature type="binding site" evidence="2">
    <location>
        <position position="23"/>
    </location>
    <ligand>
        <name>Zn(2+)</name>
        <dbReference type="ChEBI" id="CHEBI:29105"/>
        <label>2</label>
    </ligand>
</feature>
<feature type="binding site" evidence="2">
    <location>
        <position position="26"/>
    </location>
    <ligand>
        <name>Zn(2+)</name>
        <dbReference type="ChEBI" id="CHEBI:29105"/>
        <label>2</label>
    </ligand>
</feature>
<feature type="binding site" evidence="2">
    <location>
        <position position="30"/>
    </location>
    <ligand>
        <name>Zn(2+)</name>
        <dbReference type="ChEBI" id="CHEBI:29105"/>
        <label>3</label>
    </ligand>
</feature>
<feature type="binding site" evidence="2">
    <location>
        <position position="33"/>
    </location>
    <ligand>
        <name>Zn(2+)</name>
        <dbReference type="ChEBI" id="CHEBI:29105"/>
        <label>3</label>
    </ligand>
</feature>
<feature type="binding site" evidence="2">
    <location>
        <position position="46"/>
    </location>
    <ligand>
        <name>Zn(2+)</name>
        <dbReference type="ChEBI" id="CHEBI:29105"/>
        <label>1</label>
    </ligand>
</feature>
<feature type="binding site" evidence="2">
    <location>
        <position position="49"/>
    </location>
    <ligand>
        <name>Zn(2+)</name>
        <dbReference type="ChEBI" id="CHEBI:29105"/>
        <label>1</label>
    </ligand>
</feature>
<feature type="binding site" evidence="2">
    <location>
        <position position="58"/>
    </location>
    <ligand>
        <name>Zn(2+)</name>
        <dbReference type="ChEBI" id="CHEBI:29105"/>
        <label>2</label>
    </ligand>
</feature>
<feature type="binding site" evidence="2">
    <location>
        <position position="61"/>
    </location>
    <ligand>
        <name>Zn(2+)</name>
        <dbReference type="ChEBI" id="CHEBI:29105"/>
        <label>2</label>
    </ligand>
</feature>
<feature type="binding site" evidence="2">
    <location>
        <position position="72"/>
    </location>
    <ligand>
        <name>Zn(2+)</name>
        <dbReference type="ChEBI" id="CHEBI:29105"/>
        <label>3</label>
    </ligand>
</feature>
<feature type="binding site" evidence="2">
    <location>
        <position position="75"/>
    </location>
    <ligand>
        <name>Zn(2+)</name>
        <dbReference type="ChEBI" id="CHEBI:29105"/>
        <label>3</label>
    </ligand>
</feature>
<feature type="binding site" evidence="2">
    <location>
        <position position="85"/>
    </location>
    <ligand>
        <name>Zn(2+)</name>
        <dbReference type="ChEBI" id="CHEBI:29105"/>
        <label>1</label>
    </ligand>
</feature>
<feature type="site" description="Interaction with SF3B3" evidence="2">
    <location>
        <position position="17"/>
    </location>
</feature>
<feature type="site" description="Interaction with RNA" evidence="2">
    <location>
        <position position="100"/>
    </location>
</feature>
<feature type="modified residue" description="N-acetylalanine" evidence="1">
    <location>
        <position position="2"/>
    </location>
</feature>
<feature type="modified residue" description="N6-acetyllysine" evidence="2">
    <location>
        <position position="3"/>
    </location>
</feature>
<feature type="modified residue" description="Phosphoserine" evidence="2">
    <location>
        <position position="94"/>
    </location>
</feature>